<sequence>MNSYLLLLMVSLLTCIGQLCQKQAAQCWEQPQARRLNLTLRWLAIAVVSLGLGMLLWLRLLQQLPLSVAYPMLSFNFVLVTLAAQLFYGEKATLRHWLGVAAIMFGILLMSWHL</sequence>
<evidence type="ECO:0000255" key="1">
    <source>
        <dbReference type="HAMAP-Rule" id="MF_01869"/>
    </source>
</evidence>
<evidence type="ECO:0000305" key="2"/>
<feature type="chain" id="PRO_0000383012" description="Probable 4-amino-4-deoxy-L-arabinose-phosphoundecaprenol flippase subunit ArnE">
    <location>
        <begin position="1"/>
        <end position="114"/>
    </location>
</feature>
<feature type="transmembrane region" description="Helical" evidence="1">
    <location>
        <begin position="38"/>
        <end position="58"/>
    </location>
</feature>
<feature type="transmembrane region" description="Helical" evidence="1">
    <location>
        <begin position="64"/>
        <end position="84"/>
    </location>
</feature>
<feature type="transmembrane region" description="Helical" evidence="1">
    <location>
        <begin position="94"/>
        <end position="114"/>
    </location>
</feature>
<feature type="domain" description="EamA" evidence="1">
    <location>
        <begin position="43"/>
        <end position="112"/>
    </location>
</feature>
<name>ARNE_YERPE</name>
<proteinExistence type="inferred from homology"/>
<protein>
    <recommendedName>
        <fullName evidence="1">Probable 4-amino-4-deoxy-L-arabinose-phosphoundecaprenol flippase subunit ArnE</fullName>
        <shortName evidence="1">L-Ara4N-phosphoundecaprenol flippase subunit ArnE</shortName>
    </recommendedName>
    <alternativeName>
        <fullName evidence="1">Undecaprenyl phosphate-aminoarabinose flippase subunit ArnE</fullName>
    </alternativeName>
</protein>
<gene>
    <name evidence="1" type="primary">arnE</name>
    <name type="ordered locus">YPO2417</name>
    <name type="ordered locus">y1922</name>
    <name type="ordered locus">YP_2204</name>
</gene>
<reference key="1">
    <citation type="journal article" date="2001" name="Nature">
        <title>Genome sequence of Yersinia pestis, the causative agent of plague.</title>
        <authorList>
            <person name="Parkhill J."/>
            <person name="Wren B.W."/>
            <person name="Thomson N.R."/>
            <person name="Titball R.W."/>
            <person name="Holden M.T.G."/>
            <person name="Prentice M.B."/>
            <person name="Sebaihia M."/>
            <person name="James K.D."/>
            <person name="Churcher C.M."/>
            <person name="Mungall K.L."/>
            <person name="Baker S."/>
            <person name="Basham D."/>
            <person name="Bentley S.D."/>
            <person name="Brooks K."/>
            <person name="Cerdeno-Tarraga A.-M."/>
            <person name="Chillingworth T."/>
            <person name="Cronin A."/>
            <person name="Davies R.M."/>
            <person name="Davis P."/>
            <person name="Dougan G."/>
            <person name="Feltwell T."/>
            <person name="Hamlin N."/>
            <person name="Holroyd S."/>
            <person name="Jagels K."/>
            <person name="Karlyshev A.V."/>
            <person name="Leather S."/>
            <person name="Moule S."/>
            <person name="Oyston P.C.F."/>
            <person name="Quail M.A."/>
            <person name="Rutherford K.M."/>
            <person name="Simmonds M."/>
            <person name="Skelton J."/>
            <person name="Stevens K."/>
            <person name="Whitehead S."/>
            <person name="Barrell B.G."/>
        </authorList>
    </citation>
    <scope>NUCLEOTIDE SEQUENCE [LARGE SCALE GENOMIC DNA]</scope>
    <source>
        <strain>CO-92 / Biovar Orientalis</strain>
    </source>
</reference>
<reference key="2">
    <citation type="journal article" date="2002" name="J. Bacteriol.">
        <title>Genome sequence of Yersinia pestis KIM.</title>
        <authorList>
            <person name="Deng W."/>
            <person name="Burland V."/>
            <person name="Plunkett G. III"/>
            <person name="Boutin A."/>
            <person name="Mayhew G.F."/>
            <person name="Liss P."/>
            <person name="Perna N.T."/>
            <person name="Rose D.J."/>
            <person name="Mau B."/>
            <person name="Zhou S."/>
            <person name="Schwartz D.C."/>
            <person name="Fetherston J.D."/>
            <person name="Lindler L.E."/>
            <person name="Brubaker R.R."/>
            <person name="Plano G.V."/>
            <person name="Straley S.C."/>
            <person name="McDonough K.A."/>
            <person name="Nilles M.L."/>
            <person name="Matson J.S."/>
            <person name="Blattner F.R."/>
            <person name="Perry R.D."/>
        </authorList>
    </citation>
    <scope>NUCLEOTIDE SEQUENCE [LARGE SCALE GENOMIC DNA]</scope>
    <source>
        <strain>KIM10+ / Biovar Mediaevalis</strain>
    </source>
</reference>
<reference key="3">
    <citation type="journal article" date="2004" name="DNA Res.">
        <title>Complete genome sequence of Yersinia pestis strain 91001, an isolate avirulent to humans.</title>
        <authorList>
            <person name="Song Y."/>
            <person name="Tong Z."/>
            <person name="Wang J."/>
            <person name="Wang L."/>
            <person name="Guo Z."/>
            <person name="Han Y."/>
            <person name="Zhang J."/>
            <person name="Pei D."/>
            <person name="Zhou D."/>
            <person name="Qin H."/>
            <person name="Pang X."/>
            <person name="Han Y."/>
            <person name="Zhai J."/>
            <person name="Li M."/>
            <person name="Cui B."/>
            <person name="Qi Z."/>
            <person name="Jin L."/>
            <person name="Dai R."/>
            <person name="Chen F."/>
            <person name="Li S."/>
            <person name="Ye C."/>
            <person name="Du Z."/>
            <person name="Lin W."/>
            <person name="Wang J."/>
            <person name="Yu J."/>
            <person name="Yang H."/>
            <person name="Wang J."/>
            <person name="Huang P."/>
            <person name="Yang R."/>
        </authorList>
    </citation>
    <scope>NUCLEOTIDE SEQUENCE [LARGE SCALE GENOMIC DNA]</scope>
    <source>
        <strain>91001 / Biovar Mediaevalis</strain>
    </source>
</reference>
<accession>Q74TF8</accession>
<accession>Q8CL76</accession>
<organism>
    <name type="scientific">Yersinia pestis</name>
    <dbReference type="NCBI Taxonomy" id="632"/>
    <lineage>
        <taxon>Bacteria</taxon>
        <taxon>Pseudomonadati</taxon>
        <taxon>Pseudomonadota</taxon>
        <taxon>Gammaproteobacteria</taxon>
        <taxon>Enterobacterales</taxon>
        <taxon>Yersiniaceae</taxon>
        <taxon>Yersinia</taxon>
    </lineage>
</organism>
<keyword id="KW-0997">Cell inner membrane</keyword>
<keyword id="KW-1003">Cell membrane</keyword>
<keyword id="KW-0441">Lipid A biosynthesis</keyword>
<keyword id="KW-0444">Lipid biosynthesis</keyword>
<keyword id="KW-0443">Lipid metabolism</keyword>
<keyword id="KW-0448">Lipopolysaccharide biosynthesis</keyword>
<keyword id="KW-0472">Membrane</keyword>
<keyword id="KW-1185">Reference proteome</keyword>
<keyword id="KW-0812">Transmembrane</keyword>
<keyword id="KW-1133">Transmembrane helix</keyword>
<keyword id="KW-0813">Transport</keyword>
<comment type="function">
    <text evidence="1">Translocates 4-amino-4-deoxy-L-arabinose-phosphoundecaprenol (alpha-L-Ara4N-phosphoundecaprenol) from the cytoplasmic to the periplasmic side of the inner membrane.</text>
</comment>
<comment type="pathway">
    <text evidence="1">Bacterial outer membrane biogenesis; lipopolysaccharide biosynthesis.</text>
</comment>
<comment type="subunit">
    <text evidence="1">Heterodimer of ArnE and ArnF.</text>
</comment>
<comment type="subcellular location">
    <subcellularLocation>
        <location evidence="1">Cell inner membrane</location>
        <topology evidence="1">Multi-pass membrane protein</topology>
    </subcellularLocation>
</comment>
<comment type="similarity">
    <text evidence="1">Belongs to the ArnE family.</text>
</comment>
<comment type="sequence caution" evidence="2">
    <conflict type="erroneous initiation">
        <sequence resource="EMBL-CDS" id="AAM85489"/>
    </conflict>
</comment>
<dbReference type="EMBL" id="AL590842">
    <property type="protein sequence ID" value="CAL21044.1"/>
    <property type="molecule type" value="Genomic_DNA"/>
</dbReference>
<dbReference type="EMBL" id="AE009952">
    <property type="protein sequence ID" value="AAM85489.1"/>
    <property type="status" value="ALT_INIT"/>
    <property type="molecule type" value="Genomic_DNA"/>
</dbReference>
<dbReference type="EMBL" id="AE017042">
    <property type="protein sequence ID" value="AAS62410.1"/>
    <property type="molecule type" value="Genomic_DNA"/>
</dbReference>
<dbReference type="PIR" id="AI0294">
    <property type="entry name" value="AI0294"/>
</dbReference>
<dbReference type="RefSeq" id="WP_002211820.1">
    <property type="nucleotide sequence ID" value="NZ_WUCM01000025.1"/>
</dbReference>
<dbReference type="RefSeq" id="YP_002347380.1">
    <property type="nucleotide sequence ID" value="NC_003143.1"/>
</dbReference>
<dbReference type="SMR" id="Q74TF8"/>
<dbReference type="STRING" id="214092.YPO2417"/>
<dbReference type="PaxDb" id="214092-YPO2417"/>
<dbReference type="DNASU" id="1146869"/>
<dbReference type="EnsemblBacteria" id="AAS62410">
    <property type="protein sequence ID" value="AAS62410"/>
    <property type="gene ID" value="YP_2204"/>
</dbReference>
<dbReference type="GeneID" id="57976260"/>
<dbReference type="KEGG" id="ype:YPO2417"/>
<dbReference type="KEGG" id="ypk:y1922"/>
<dbReference type="KEGG" id="ypm:YP_2204"/>
<dbReference type="PATRIC" id="fig|1028802.3.peg.701"/>
<dbReference type="eggNOG" id="COG2076">
    <property type="taxonomic scope" value="Bacteria"/>
</dbReference>
<dbReference type="HOGENOM" id="CLU_131462_5_1_6"/>
<dbReference type="OMA" id="TCAGQLC"/>
<dbReference type="OrthoDB" id="6058674at2"/>
<dbReference type="UniPathway" id="UPA00030"/>
<dbReference type="Proteomes" id="UP000000815">
    <property type="component" value="Chromosome"/>
</dbReference>
<dbReference type="Proteomes" id="UP000001019">
    <property type="component" value="Chromosome"/>
</dbReference>
<dbReference type="Proteomes" id="UP000002490">
    <property type="component" value="Chromosome"/>
</dbReference>
<dbReference type="GO" id="GO:0005886">
    <property type="term" value="C:plasma membrane"/>
    <property type="evidence" value="ECO:0000318"/>
    <property type="project" value="GO_Central"/>
</dbReference>
<dbReference type="GO" id="GO:1901505">
    <property type="term" value="F:carbohydrate derivative transmembrane transporter activity"/>
    <property type="evidence" value="ECO:0007669"/>
    <property type="project" value="InterPro"/>
</dbReference>
<dbReference type="GO" id="GO:0022857">
    <property type="term" value="F:transmembrane transporter activity"/>
    <property type="evidence" value="ECO:0000318"/>
    <property type="project" value="GO_Central"/>
</dbReference>
<dbReference type="GO" id="GO:0009245">
    <property type="term" value="P:lipid A biosynthetic process"/>
    <property type="evidence" value="ECO:0007669"/>
    <property type="project" value="UniProtKB-UniRule"/>
</dbReference>
<dbReference type="GO" id="GO:0009103">
    <property type="term" value="P:lipopolysaccharide biosynthetic process"/>
    <property type="evidence" value="ECO:0007669"/>
    <property type="project" value="UniProtKB-UniRule"/>
</dbReference>
<dbReference type="GO" id="GO:0055085">
    <property type="term" value="P:transmembrane transport"/>
    <property type="evidence" value="ECO:0000318"/>
    <property type="project" value="GO_Central"/>
</dbReference>
<dbReference type="FunFam" id="1.10.3730.20:FF:000002">
    <property type="entry name" value="Probable 4-amino-4-deoxy-L-arabinose-phosphoundecaprenol flippase subunit ArnE"/>
    <property type="match status" value="1"/>
</dbReference>
<dbReference type="Gene3D" id="1.10.3730.20">
    <property type="match status" value="1"/>
</dbReference>
<dbReference type="HAMAP" id="MF_01869">
    <property type="entry name" value="Flippase_ArnE"/>
    <property type="match status" value="1"/>
</dbReference>
<dbReference type="InterPro" id="IPR000620">
    <property type="entry name" value="EamA_dom"/>
</dbReference>
<dbReference type="InterPro" id="IPR022883">
    <property type="entry name" value="Flippase_ArnE"/>
</dbReference>
<dbReference type="InterPro" id="IPR000390">
    <property type="entry name" value="Small_drug/metabolite_transptr"/>
</dbReference>
<dbReference type="NCBIfam" id="NF011625">
    <property type="entry name" value="PRK15051.1"/>
    <property type="match status" value="1"/>
</dbReference>
<dbReference type="PANTHER" id="PTHR30561:SF23">
    <property type="entry name" value="4-AMINO-4-DEOXY-L-ARABINOSE-PHOSPHOUNDECAPRENOL FLIPPASE SUBUNIT ARNE-RELATED"/>
    <property type="match status" value="1"/>
</dbReference>
<dbReference type="PANTHER" id="PTHR30561">
    <property type="entry name" value="SMR FAMILY PROTON-DEPENDENT DRUG EFFLUX TRANSPORTER SUGE"/>
    <property type="match status" value="1"/>
</dbReference>
<dbReference type="Pfam" id="PF00892">
    <property type="entry name" value="EamA"/>
    <property type="match status" value="1"/>
</dbReference>
<dbReference type="SUPFAM" id="SSF103481">
    <property type="entry name" value="Multidrug resistance efflux transporter EmrE"/>
    <property type="match status" value="1"/>
</dbReference>